<name>ATPB_PSEE4</name>
<dbReference type="EC" id="7.1.2.2" evidence="1"/>
<dbReference type="EMBL" id="CT573326">
    <property type="protein sequence ID" value="CAK18149.1"/>
    <property type="molecule type" value="Genomic_DNA"/>
</dbReference>
<dbReference type="RefSeq" id="WP_011536501.1">
    <property type="nucleotide sequence ID" value="NC_008027.1"/>
</dbReference>
<dbReference type="SMR" id="Q1I2I7"/>
<dbReference type="STRING" id="384676.PSEEN5542"/>
<dbReference type="GeneID" id="32808441"/>
<dbReference type="KEGG" id="pen:PSEEN5542"/>
<dbReference type="eggNOG" id="COG0055">
    <property type="taxonomic scope" value="Bacteria"/>
</dbReference>
<dbReference type="HOGENOM" id="CLU_022398_0_2_6"/>
<dbReference type="OrthoDB" id="9801639at2"/>
<dbReference type="Proteomes" id="UP000000658">
    <property type="component" value="Chromosome"/>
</dbReference>
<dbReference type="GO" id="GO:0005886">
    <property type="term" value="C:plasma membrane"/>
    <property type="evidence" value="ECO:0007669"/>
    <property type="project" value="UniProtKB-SubCell"/>
</dbReference>
<dbReference type="GO" id="GO:0045259">
    <property type="term" value="C:proton-transporting ATP synthase complex"/>
    <property type="evidence" value="ECO:0007669"/>
    <property type="project" value="UniProtKB-KW"/>
</dbReference>
<dbReference type="GO" id="GO:0005524">
    <property type="term" value="F:ATP binding"/>
    <property type="evidence" value="ECO:0007669"/>
    <property type="project" value="UniProtKB-UniRule"/>
</dbReference>
<dbReference type="GO" id="GO:0016887">
    <property type="term" value="F:ATP hydrolysis activity"/>
    <property type="evidence" value="ECO:0007669"/>
    <property type="project" value="InterPro"/>
</dbReference>
<dbReference type="GO" id="GO:0046933">
    <property type="term" value="F:proton-transporting ATP synthase activity, rotational mechanism"/>
    <property type="evidence" value="ECO:0007669"/>
    <property type="project" value="UniProtKB-UniRule"/>
</dbReference>
<dbReference type="CDD" id="cd18110">
    <property type="entry name" value="ATP-synt_F1_beta_C"/>
    <property type="match status" value="1"/>
</dbReference>
<dbReference type="CDD" id="cd18115">
    <property type="entry name" value="ATP-synt_F1_beta_N"/>
    <property type="match status" value="1"/>
</dbReference>
<dbReference type="CDD" id="cd01133">
    <property type="entry name" value="F1-ATPase_beta_CD"/>
    <property type="match status" value="1"/>
</dbReference>
<dbReference type="FunFam" id="1.10.1140.10:FF:000001">
    <property type="entry name" value="ATP synthase subunit beta"/>
    <property type="match status" value="1"/>
</dbReference>
<dbReference type="FunFam" id="3.40.50.300:FF:000004">
    <property type="entry name" value="ATP synthase subunit beta"/>
    <property type="match status" value="1"/>
</dbReference>
<dbReference type="Gene3D" id="2.40.10.170">
    <property type="match status" value="1"/>
</dbReference>
<dbReference type="Gene3D" id="1.10.1140.10">
    <property type="entry name" value="Bovine Mitochondrial F1-atpase, Atp Synthase Beta Chain, Chain D, domain 3"/>
    <property type="match status" value="1"/>
</dbReference>
<dbReference type="Gene3D" id="3.40.50.300">
    <property type="entry name" value="P-loop containing nucleotide triphosphate hydrolases"/>
    <property type="match status" value="1"/>
</dbReference>
<dbReference type="HAMAP" id="MF_01347">
    <property type="entry name" value="ATP_synth_beta_bact"/>
    <property type="match status" value="1"/>
</dbReference>
<dbReference type="InterPro" id="IPR003593">
    <property type="entry name" value="AAA+_ATPase"/>
</dbReference>
<dbReference type="InterPro" id="IPR055190">
    <property type="entry name" value="ATP-synt_VA_C"/>
</dbReference>
<dbReference type="InterPro" id="IPR005722">
    <property type="entry name" value="ATP_synth_F1_bsu"/>
</dbReference>
<dbReference type="InterPro" id="IPR020003">
    <property type="entry name" value="ATPase_a/bsu_AS"/>
</dbReference>
<dbReference type="InterPro" id="IPR050053">
    <property type="entry name" value="ATPase_alpha/beta_chains"/>
</dbReference>
<dbReference type="InterPro" id="IPR004100">
    <property type="entry name" value="ATPase_F1/V1/A1_a/bsu_N"/>
</dbReference>
<dbReference type="InterPro" id="IPR036121">
    <property type="entry name" value="ATPase_F1/V1/A1_a/bsu_N_sf"/>
</dbReference>
<dbReference type="InterPro" id="IPR000194">
    <property type="entry name" value="ATPase_F1/V1/A1_a/bsu_nucl-bd"/>
</dbReference>
<dbReference type="InterPro" id="IPR024034">
    <property type="entry name" value="ATPase_F1/V1_b/a_C"/>
</dbReference>
<dbReference type="InterPro" id="IPR027417">
    <property type="entry name" value="P-loop_NTPase"/>
</dbReference>
<dbReference type="NCBIfam" id="TIGR01039">
    <property type="entry name" value="atpD"/>
    <property type="match status" value="1"/>
</dbReference>
<dbReference type="PANTHER" id="PTHR15184">
    <property type="entry name" value="ATP SYNTHASE"/>
    <property type="match status" value="1"/>
</dbReference>
<dbReference type="PANTHER" id="PTHR15184:SF71">
    <property type="entry name" value="ATP SYNTHASE SUBUNIT BETA, MITOCHONDRIAL"/>
    <property type="match status" value="1"/>
</dbReference>
<dbReference type="Pfam" id="PF00006">
    <property type="entry name" value="ATP-synt_ab"/>
    <property type="match status" value="1"/>
</dbReference>
<dbReference type="Pfam" id="PF02874">
    <property type="entry name" value="ATP-synt_ab_N"/>
    <property type="match status" value="1"/>
</dbReference>
<dbReference type="Pfam" id="PF22919">
    <property type="entry name" value="ATP-synt_VA_C"/>
    <property type="match status" value="1"/>
</dbReference>
<dbReference type="SMART" id="SM00382">
    <property type="entry name" value="AAA"/>
    <property type="match status" value="1"/>
</dbReference>
<dbReference type="SUPFAM" id="SSF47917">
    <property type="entry name" value="C-terminal domain of alpha and beta subunits of F1 ATP synthase"/>
    <property type="match status" value="1"/>
</dbReference>
<dbReference type="SUPFAM" id="SSF50615">
    <property type="entry name" value="N-terminal domain of alpha and beta subunits of F1 ATP synthase"/>
    <property type="match status" value="1"/>
</dbReference>
<dbReference type="SUPFAM" id="SSF52540">
    <property type="entry name" value="P-loop containing nucleoside triphosphate hydrolases"/>
    <property type="match status" value="1"/>
</dbReference>
<dbReference type="PROSITE" id="PS00152">
    <property type="entry name" value="ATPASE_ALPHA_BETA"/>
    <property type="match status" value="1"/>
</dbReference>
<keyword id="KW-0066">ATP synthesis</keyword>
<keyword id="KW-0067">ATP-binding</keyword>
<keyword id="KW-0997">Cell inner membrane</keyword>
<keyword id="KW-1003">Cell membrane</keyword>
<keyword id="KW-0139">CF(1)</keyword>
<keyword id="KW-0375">Hydrogen ion transport</keyword>
<keyword id="KW-0406">Ion transport</keyword>
<keyword id="KW-0472">Membrane</keyword>
<keyword id="KW-0547">Nucleotide-binding</keyword>
<keyword id="KW-1278">Translocase</keyword>
<keyword id="KW-0813">Transport</keyword>
<feature type="chain" id="PRO_1000055147" description="ATP synthase subunit beta">
    <location>
        <begin position="1"/>
        <end position="458"/>
    </location>
</feature>
<feature type="binding site" evidence="1">
    <location>
        <begin position="148"/>
        <end position="155"/>
    </location>
    <ligand>
        <name>ATP</name>
        <dbReference type="ChEBI" id="CHEBI:30616"/>
    </ligand>
</feature>
<comment type="function">
    <text evidence="1">Produces ATP from ADP in the presence of a proton gradient across the membrane. The catalytic sites are hosted primarily by the beta subunits.</text>
</comment>
<comment type="catalytic activity">
    <reaction evidence="1">
        <text>ATP + H2O + 4 H(+)(in) = ADP + phosphate + 5 H(+)(out)</text>
        <dbReference type="Rhea" id="RHEA:57720"/>
        <dbReference type="ChEBI" id="CHEBI:15377"/>
        <dbReference type="ChEBI" id="CHEBI:15378"/>
        <dbReference type="ChEBI" id="CHEBI:30616"/>
        <dbReference type="ChEBI" id="CHEBI:43474"/>
        <dbReference type="ChEBI" id="CHEBI:456216"/>
        <dbReference type="EC" id="7.1.2.2"/>
    </reaction>
</comment>
<comment type="subunit">
    <text evidence="1">F-type ATPases have 2 components, CF(1) - the catalytic core - and CF(0) - the membrane proton channel. CF(1) has five subunits: alpha(3), beta(3), gamma(1), delta(1), epsilon(1). CF(0) has three main subunits: a(1), b(2) and c(9-12). The alpha and beta chains form an alternating ring which encloses part of the gamma chain. CF(1) is attached to CF(0) by a central stalk formed by the gamma and epsilon chains, while a peripheral stalk is formed by the delta and b chains.</text>
</comment>
<comment type="subcellular location">
    <subcellularLocation>
        <location evidence="1">Cell inner membrane</location>
        <topology evidence="1">Peripheral membrane protein</topology>
    </subcellularLocation>
</comment>
<comment type="similarity">
    <text evidence="1">Belongs to the ATPase alpha/beta chains family.</text>
</comment>
<accession>Q1I2I7</accession>
<protein>
    <recommendedName>
        <fullName evidence="1">ATP synthase subunit beta</fullName>
        <ecNumber evidence="1">7.1.2.2</ecNumber>
    </recommendedName>
    <alternativeName>
        <fullName evidence="1">ATP synthase F1 sector subunit beta</fullName>
    </alternativeName>
    <alternativeName>
        <fullName evidence="1">F-ATPase subunit beta</fullName>
    </alternativeName>
</protein>
<evidence type="ECO:0000255" key="1">
    <source>
        <dbReference type="HAMAP-Rule" id="MF_01347"/>
    </source>
</evidence>
<sequence>MSSGRIVQIIGAVIDVEFPRDAVPSVYNALKVQGAETTLEVQQQLGDGVVRTIAMGSTEGLKRGLDVVDTKAAISVPVGKATLGRIMDVLGNPIDEAGPIGEEERRGIHRKAPSFAEQAGGNDLLETGIKVIDLVCPFAKGGKVGLFGGAGVGKTVNMMELIRNIAIEHSGYSVFAGVGERTREGNDFYHEMKDSNVLDKVALVYGQMNEPPGNRLRVALTGLTMAEKFRDEGNDVLLFVDNIYRYTLAGTEVSALLGRMPSAVGYQPTLAEEMGVLQERITSTKEGSITSIQAVYVPADDLTDPSPATTFAHLDATVVLSRDIASLGIYPAVDPLDSTSRQLDPNVIGNEHYETARQVQYVLQRYKELKDIIAILGMDELSETDKQLVARARKIQRFLSQPFFVAEVFTGSPGKYVSLKDTIAGFSGILKGDYDHLPEQAFYMVGSIDEAIEKAKKL</sequence>
<reference key="1">
    <citation type="journal article" date="2006" name="Nat. Biotechnol.">
        <title>Complete genome sequence of the entomopathogenic and metabolically versatile soil bacterium Pseudomonas entomophila.</title>
        <authorList>
            <person name="Vodovar N."/>
            <person name="Vallenet D."/>
            <person name="Cruveiller S."/>
            <person name="Rouy Z."/>
            <person name="Barbe V."/>
            <person name="Acosta C."/>
            <person name="Cattolico L."/>
            <person name="Jubin C."/>
            <person name="Lajus A."/>
            <person name="Segurens B."/>
            <person name="Vacherie B."/>
            <person name="Wincker P."/>
            <person name="Weissenbach J."/>
            <person name="Lemaitre B."/>
            <person name="Medigue C."/>
            <person name="Boccard F."/>
        </authorList>
    </citation>
    <scope>NUCLEOTIDE SEQUENCE [LARGE SCALE GENOMIC DNA]</scope>
    <source>
        <strain>L48</strain>
    </source>
</reference>
<gene>
    <name evidence="1" type="primary">atpD</name>
    <name type="ordered locus">PSEEN5542</name>
</gene>
<proteinExistence type="inferred from homology"/>
<organism>
    <name type="scientific">Pseudomonas entomophila (strain L48)</name>
    <dbReference type="NCBI Taxonomy" id="384676"/>
    <lineage>
        <taxon>Bacteria</taxon>
        <taxon>Pseudomonadati</taxon>
        <taxon>Pseudomonadota</taxon>
        <taxon>Gammaproteobacteria</taxon>
        <taxon>Pseudomonadales</taxon>
        <taxon>Pseudomonadaceae</taxon>
        <taxon>Pseudomonas</taxon>
    </lineage>
</organism>